<reference key="1">
    <citation type="submission" date="2008-04" db="EMBL/GenBank/DDBJ databases">
        <title>Complete sequence of Clostridium botulinum strain Eklund.</title>
        <authorList>
            <person name="Brinkac L.M."/>
            <person name="Brown J.L."/>
            <person name="Bruce D."/>
            <person name="Detter C."/>
            <person name="Munk C."/>
            <person name="Smith L.A."/>
            <person name="Smith T.J."/>
            <person name="Sutton G."/>
            <person name="Brettin T.S."/>
        </authorList>
    </citation>
    <scope>NUCLEOTIDE SEQUENCE [LARGE SCALE GENOMIC DNA]</scope>
    <source>
        <strain>Eklund 17B / Type B</strain>
    </source>
</reference>
<name>TAL_CLOBB</name>
<protein>
    <recommendedName>
        <fullName evidence="1">Probable transaldolase</fullName>
        <ecNumber evidence="1">2.2.1.2</ecNumber>
    </recommendedName>
</protein>
<keyword id="KW-0963">Cytoplasm</keyword>
<keyword id="KW-0570">Pentose shunt</keyword>
<keyword id="KW-0704">Schiff base</keyword>
<keyword id="KW-0808">Transferase</keyword>
<gene>
    <name evidence="1" type="primary">tal</name>
    <name type="ordered locus">CLL_A1586</name>
</gene>
<feature type="chain" id="PRO_1000126294" description="Probable transaldolase">
    <location>
        <begin position="1"/>
        <end position="214"/>
    </location>
</feature>
<feature type="active site" description="Schiff-base intermediate with substrate" evidence="1">
    <location>
        <position position="83"/>
    </location>
</feature>
<evidence type="ECO:0000255" key="1">
    <source>
        <dbReference type="HAMAP-Rule" id="MF_00494"/>
    </source>
</evidence>
<proteinExistence type="inferred from homology"/>
<sequence>MKIFVDTANIEEIKKANELGVICGVTTNPSLIAKEGRDFKEVIKEITSIVDGPISGEVISMECEGMVKEAREIAKIHENMVIKIPMCAEGLKAVNILHKEGIKTNVTLIFSAVQALLAARAGASYVSPFLGRLDDIGSTGMTLIEDISEIFAVHGIETEIISASVRNPIHVLECAKAGSDIATIPYNVIMQMIKHPLTDAGIEKFLKDYEGMNK</sequence>
<dbReference type="EC" id="2.2.1.2" evidence="1"/>
<dbReference type="EMBL" id="CP001056">
    <property type="protein sequence ID" value="ACD24413.1"/>
    <property type="molecule type" value="Genomic_DNA"/>
</dbReference>
<dbReference type="SMR" id="B2TKE5"/>
<dbReference type="KEGG" id="cbk:CLL_A1586"/>
<dbReference type="PATRIC" id="fig|935198.13.peg.1532"/>
<dbReference type="HOGENOM" id="CLU_079764_0_0_9"/>
<dbReference type="UniPathway" id="UPA00115">
    <property type="reaction ID" value="UER00414"/>
</dbReference>
<dbReference type="Proteomes" id="UP000001195">
    <property type="component" value="Chromosome"/>
</dbReference>
<dbReference type="GO" id="GO:0005737">
    <property type="term" value="C:cytoplasm"/>
    <property type="evidence" value="ECO:0007669"/>
    <property type="project" value="UniProtKB-SubCell"/>
</dbReference>
<dbReference type="GO" id="GO:0016832">
    <property type="term" value="F:aldehyde-lyase activity"/>
    <property type="evidence" value="ECO:0007669"/>
    <property type="project" value="InterPro"/>
</dbReference>
<dbReference type="GO" id="GO:0004801">
    <property type="term" value="F:transaldolase activity"/>
    <property type="evidence" value="ECO:0007669"/>
    <property type="project" value="UniProtKB-UniRule"/>
</dbReference>
<dbReference type="GO" id="GO:0005975">
    <property type="term" value="P:carbohydrate metabolic process"/>
    <property type="evidence" value="ECO:0007669"/>
    <property type="project" value="InterPro"/>
</dbReference>
<dbReference type="GO" id="GO:0006098">
    <property type="term" value="P:pentose-phosphate shunt"/>
    <property type="evidence" value="ECO:0007669"/>
    <property type="project" value="UniProtKB-UniRule"/>
</dbReference>
<dbReference type="CDD" id="cd00956">
    <property type="entry name" value="Transaldolase_FSA"/>
    <property type="match status" value="1"/>
</dbReference>
<dbReference type="FunFam" id="3.20.20.70:FF:000018">
    <property type="entry name" value="Probable transaldolase"/>
    <property type="match status" value="1"/>
</dbReference>
<dbReference type="Gene3D" id="3.20.20.70">
    <property type="entry name" value="Aldolase class I"/>
    <property type="match status" value="1"/>
</dbReference>
<dbReference type="HAMAP" id="MF_00494">
    <property type="entry name" value="Transaldolase_3b"/>
    <property type="match status" value="1"/>
</dbReference>
<dbReference type="InterPro" id="IPR013785">
    <property type="entry name" value="Aldolase_TIM"/>
</dbReference>
<dbReference type="InterPro" id="IPR001585">
    <property type="entry name" value="TAL/FSA"/>
</dbReference>
<dbReference type="InterPro" id="IPR022999">
    <property type="entry name" value="Transaldolase_3B"/>
</dbReference>
<dbReference type="InterPro" id="IPR004731">
    <property type="entry name" value="Transaldolase_3B/F6P_aldolase"/>
</dbReference>
<dbReference type="InterPro" id="IPR018225">
    <property type="entry name" value="Transaldolase_AS"/>
</dbReference>
<dbReference type="InterPro" id="IPR033919">
    <property type="entry name" value="TSA/FSA_arc/bac"/>
</dbReference>
<dbReference type="NCBIfam" id="TIGR00875">
    <property type="entry name" value="fsa_talC_mipB"/>
    <property type="match status" value="1"/>
</dbReference>
<dbReference type="PANTHER" id="PTHR10683">
    <property type="entry name" value="TRANSALDOLASE"/>
    <property type="match status" value="1"/>
</dbReference>
<dbReference type="PANTHER" id="PTHR10683:SF36">
    <property type="entry name" value="TRANSALDOLASE"/>
    <property type="match status" value="1"/>
</dbReference>
<dbReference type="Pfam" id="PF00923">
    <property type="entry name" value="TAL_FSA"/>
    <property type="match status" value="1"/>
</dbReference>
<dbReference type="SUPFAM" id="SSF51569">
    <property type="entry name" value="Aldolase"/>
    <property type="match status" value="1"/>
</dbReference>
<dbReference type="PROSITE" id="PS01054">
    <property type="entry name" value="TRANSALDOLASE_1"/>
    <property type="match status" value="1"/>
</dbReference>
<organism>
    <name type="scientific">Clostridium botulinum (strain Eklund 17B / Type B)</name>
    <dbReference type="NCBI Taxonomy" id="935198"/>
    <lineage>
        <taxon>Bacteria</taxon>
        <taxon>Bacillati</taxon>
        <taxon>Bacillota</taxon>
        <taxon>Clostridia</taxon>
        <taxon>Eubacteriales</taxon>
        <taxon>Clostridiaceae</taxon>
        <taxon>Clostridium</taxon>
    </lineage>
</organism>
<accession>B2TKE5</accession>
<comment type="function">
    <text evidence="1">Transaldolase is important for the balance of metabolites in the pentose-phosphate pathway.</text>
</comment>
<comment type="catalytic activity">
    <reaction evidence="1">
        <text>D-sedoheptulose 7-phosphate + D-glyceraldehyde 3-phosphate = D-erythrose 4-phosphate + beta-D-fructose 6-phosphate</text>
        <dbReference type="Rhea" id="RHEA:17053"/>
        <dbReference type="ChEBI" id="CHEBI:16897"/>
        <dbReference type="ChEBI" id="CHEBI:57483"/>
        <dbReference type="ChEBI" id="CHEBI:57634"/>
        <dbReference type="ChEBI" id="CHEBI:59776"/>
        <dbReference type="EC" id="2.2.1.2"/>
    </reaction>
</comment>
<comment type="pathway">
    <text evidence="1">Carbohydrate degradation; pentose phosphate pathway; D-glyceraldehyde 3-phosphate and beta-D-fructose 6-phosphate from D-ribose 5-phosphate and D-xylulose 5-phosphate (non-oxidative stage): step 2/3.</text>
</comment>
<comment type="subcellular location">
    <subcellularLocation>
        <location evidence="1">Cytoplasm</location>
    </subcellularLocation>
</comment>
<comment type="similarity">
    <text evidence="1">Belongs to the transaldolase family. Type 3B subfamily.</text>
</comment>